<accession>B4T048</accession>
<sequence>MNQTYGRLVSRAAIAATAMASALLLIKIFAWWYTGSVSILAALVDSLVDIAASLTNLLVVRYSLQPADDEHTFGHGKAESLAALAQSMFISGSALFLFLTSIQNLIKPTPMNDPGVGIGVTVIALICTIILVTFQRWVVRKTQSQAVRADMLHYQSDVMMNGAILIALGLSWYGWHRADALFALGIGIYILYSALRMGYEAVQSLLDRALPDAERQEIIDIVTSWPGVSGAHDLRTRQSGPTRFIQIHLEMEDNLPLVQAHFVADQVEQAILQRFPGSDVIIHQDPCSVVPREGRKFELV</sequence>
<evidence type="ECO:0000255" key="1">
    <source>
        <dbReference type="HAMAP-Rule" id="MF_01425"/>
    </source>
</evidence>
<gene>
    <name evidence="1" type="primary">fieF</name>
    <name type="ordered locus">SNSL254_A4390</name>
</gene>
<organism>
    <name type="scientific">Salmonella newport (strain SL254)</name>
    <dbReference type="NCBI Taxonomy" id="423368"/>
    <lineage>
        <taxon>Bacteria</taxon>
        <taxon>Pseudomonadati</taxon>
        <taxon>Pseudomonadota</taxon>
        <taxon>Gammaproteobacteria</taxon>
        <taxon>Enterobacterales</taxon>
        <taxon>Enterobacteriaceae</taxon>
        <taxon>Salmonella</taxon>
    </lineage>
</organism>
<feature type="chain" id="PRO_1000145704" description="Cation-efflux pump FieF">
    <location>
        <begin position="1"/>
        <end position="300"/>
    </location>
</feature>
<feature type="transmembrane region" description="Helical" evidence="1">
    <location>
        <begin position="24"/>
        <end position="44"/>
    </location>
</feature>
<feature type="transmembrane region" description="Helical" evidence="1">
    <location>
        <begin position="82"/>
        <end position="102"/>
    </location>
</feature>
<feature type="transmembrane region" description="Helical" evidence="1">
    <location>
        <begin position="114"/>
        <end position="134"/>
    </location>
</feature>
<feature type="transmembrane region" description="Helical" evidence="1">
    <location>
        <begin position="156"/>
        <end position="176"/>
    </location>
</feature>
<feature type="transmembrane region" description="Helical" evidence="1">
    <location>
        <begin position="178"/>
        <end position="198"/>
    </location>
</feature>
<feature type="binding site" evidence="1">
    <location>
        <position position="45"/>
    </location>
    <ligand>
        <name>Zn(2+)</name>
        <dbReference type="ChEBI" id="CHEBI:29105"/>
    </ligand>
</feature>
<feature type="binding site" evidence="1">
    <location>
        <position position="49"/>
    </location>
    <ligand>
        <name>Zn(2+)</name>
        <dbReference type="ChEBI" id="CHEBI:29105"/>
    </ligand>
</feature>
<feature type="binding site" evidence="1">
    <location>
        <position position="153"/>
    </location>
    <ligand>
        <name>Zn(2+)</name>
        <dbReference type="ChEBI" id="CHEBI:29105"/>
    </ligand>
</feature>
<feature type="binding site" evidence="1">
    <location>
        <position position="157"/>
    </location>
    <ligand>
        <name>Zn(2+)</name>
        <dbReference type="ChEBI" id="CHEBI:29105"/>
    </ligand>
</feature>
<comment type="function">
    <text evidence="1">Divalent metal cation transporter which exports Zn(2+), Cd(2+) and possibly Fe(2+). May be involved in zinc and iron detoxification by efflux.</text>
</comment>
<comment type="catalytic activity">
    <reaction evidence="1">
        <text>Zn(2+)(in) + H(+)(out) = Zn(2+)(out) + H(+)(in)</text>
        <dbReference type="Rhea" id="RHEA:28839"/>
        <dbReference type="ChEBI" id="CHEBI:15378"/>
        <dbReference type="ChEBI" id="CHEBI:29105"/>
    </reaction>
</comment>
<comment type="catalytic activity">
    <reaction evidence="1">
        <text>Cd(2+)(in) + H(+)(out) = Cd(2+)(out) + H(+)(in)</text>
        <dbReference type="Rhea" id="RHEA:28739"/>
        <dbReference type="ChEBI" id="CHEBI:15378"/>
        <dbReference type="ChEBI" id="CHEBI:48775"/>
    </reaction>
</comment>
<comment type="catalytic activity">
    <reaction evidence="1">
        <text>Fe(2+)(in) + H(+)(out) = Fe(2+)(out) + H(+)(in)</text>
        <dbReference type="Rhea" id="RHEA:29439"/>
        <dbReference type="ChEBI" id="CHEBI:15378"/>
        <dbReference type="ChEBI" id="CHEBI:29033"/>
    </reaction>
</comment>
<comment type="subunit">
    <text evidence="1">Homodimer.</text>
</comment>
<comment type="subcellular location">
    <subcellularLocation>
        <location evidence="1">Cell inner membrane</location>
        <topology evidence="1">Multi-pass membrane protein</topology>
    </subcellularLocation>
</comment>
<comment type="similarity">
    <text evidence="1">Belongs to the cation diffusion facilitator (CDF) transporter (TC 2.A.4) family. FieF subfamily.</text>
</comment>
<name>FIEF_SALNS</name>
<keyword id="KW-0997">Cell inner membrane</keyword>
<keyword id="KW-1003">Cell membrane</keyword>
<keyword id="KW-0406">Ion transport</keyword>
<keyword id="KW-0408">Iron</keyword>
<keyword id="KW-0410">Iron transport</keyword>
<keyword id="KW-0472">Membrane</keyword>
<keyword id="KW-0479">Metal-binding</keyword>
<keyword id="KW-0812">Transmembrane</keyword>
<keyword id="KW-1133">Transmembrane helix</keyword>
<keyword id="KW-0813">Transport</keyword>
<keyword id="KW-0862">Zinc</keyword>
<keyword id="KW-0864">Zinc transport</keyword>
<reference key="1">
    <citation type="journal article" date="2011" name="J. Bacteriol.">
        <title>Comparative genomics of 28 Salmonella enterica isolates: evidence for CRISPR-mediated adaptive sublineage evolution.</title>
        <authorList>
            <person name="Fricke W.F."/>
            <person name="Mammel M.K."/>
            <person name="McDermott P.F."/>
            <person name="Tartera C."/>
            <person name="White D.G."/>
            <person name="Leclerc J.E."/>
            <person name="Ravel J."/>
            <person name="Cebula T.A."/>
        </authorList>
    </citation>
    <scope>NUCLEOTIDE SEQUENCE [LARGE SCALE GENOMIC DNA]</scope>
    <source>
        <strain>SL254</strain>
    </source>
</reference>
<protein>
    <recommendedName>
        <fullName evidence="1">Cation-efflux pump FieF</fullName>
    </recommendedName>
</protein>
<proteinExistence type="inferred from homology"/>
<dbReference type="EMBL" id="CP001113">
    <property type="protein sequence ID" value="ACF61301.1"/>
    <property type="molecule type" value="Genomic_DNA"/>
</dbReference>
<dbReference type="RefSeq" id="WP_001077320.1">
    <property type="nucleotide sequence ID" value="NZ_CCMR01000001.1"/>
</dbReference>
<dbReference type="SMR" id="B4T048"/>
<dbReference type="KEGG" id="see:SNSL254_A4390"/>
<dbReference type="HOGENOM" id="CLU_013430_3_0_6"/>
<dbReference type="Proteomes" id="UP000008824">
    <property type="component" value="Chromosome"/>
</dbReference>
<dbReference type="GO" id="GO:0005886">
    <property type="term" value="C:plasma membrane"/>
    <property type="evidence" value="ECO:0007669"/>
    <property type="project" value="UniProtKB-SubCell"/>
</dbReference>
<dbReference type="GO" id="GO:0015086">
    <property type="term" value="F:cadmium ion transmembrane transporter activity"/>
    <property type="evidence" value="ECO:0007669"/>
    <property type="project" value="UniProtKB-UniRule"/>
</dbReference>
<dbReference type="GO" id="GO:0015093">
    <property type="term" value="F:ferrous iron transmembrane transporter activity"/>
    <property type="evidence" value="ECO:0007669"/>
    <property type="project" value="TreeGrafter"/>
</dbReference>
<dbReference type="GO" id="GO:0046872">
    <property type="term" value="F:metal ion binding"/>
    <property type="evidence" value="ECO:0007669"/>
    <property type="project" value="UniProtKB-KW"/>
</dbReference>
<dbReference type="GO" id="GO:0015341">
    <property type="term" value="F:zinc efflux antiporter activity"/>
    <property type="evidence" value="ECO:0007669"/>
    <property type="project" value="TreeGrafter"/>
</dbReference>
<dbReference type="GO" id="GO:0006882">
    <property type="term" value="P:intracellular zinc ion homeostasis"/>
    <property type="evidence" value="ECO:0007669"/>
    <property type="project" value="TreeGrafter"/>
</dbReference>
<dbReference type="FunFam" id="1.20.1510.10:FF:000001">
    <property type="entry name" value="Ferrous-iron efflux pump FieF"/>
    <property type="match status" value="1"/>
</dbReference>
<dbReference type="FunFam" id="3.30.70.1350:FF:000002">
    <property type="entry name" value="Ferrous-iron efflux pump FieF"/>
    <property type="match status" value="1"/>
</dbReference>
<dbReference type="Gene3D" id="1.20.1510.10">
    <property type="entry name" value="Cation efflux protein transmembrane domain"/>
    <property type="match status" value="1"/>
</dbReference>
<dbReference type="Gene3D" id="3.30.70.1350">
    <property type="entry name" value="Cation efflux protein, cytoplasmic domain"/>
    <property type="match status" value="1"/>
</dbReference>
<dbReference type="HAMAP" id="MF_01425">
    <property type="entry name" value="Cation_efflux_FieF"/>
    <property type="match status" value="1"/>
</dbReference>
<dbReference type="InterPro" id="IPR002524">
    <property type="entry name" value="Cation_efflux"/>
</dbReference>
<dbReference type="InterPro" id="IPR027470">
    <property type="entry name" value="Cation_efflux_CTD"/>
</dbReference>
<dbReference type="InterPro" id="IPR036837">
    <property type="entry name" value="Cation_efflux_CTD_sf"/>
</dbReference>
<dbReference type="InterPro" id="IPR023783">
    <property type="entry name" value="Cation_efflux_FieF"/>
</dbReference>
<dbReference type="InterPro" id="IPR027469">
    <property type="entry name" value="Cation_efflux_TMD_sf"/>
</dbReference>
<dbReference type="InterPro" id="IPR050291">
    <property type="entry name" value="CDF_Transporter"/>
</dbReference>
<dbReference type="NCBIfam" id="TIGR01297">
    <property type="entry name" value="CDF"/>
    <property type="match status" value="1"/>
</dbReference>
<dbReference type="NCBIfam" id="NF007064">
    <property type="entry name" value="PRK09509.1"/>
    <property type="match status" value="1"/>
</dbReference>
<dbReference type="PANTHER" id="PTHR43840:SF41">
    <property type="entry name" value="CATION-EFFLUX PUMP FIEF"/>
    <property type="match status" value="1"/>
</dbReference>
<dbReference type="PANTHER" id="PTHR43840">
    <property type="entry name" value="MITOCHONDRIAL METAL TRANSPORTER 1-RELATED"/>
    <property type="match status" value="1"/>
</dbReference>
<dbReference type="Pfam" id="PF01545">
    <property type="entry name" value="Cation_efflux"/>
    <property type="match status" value="1"/>
</dbReference>
<dbReference type="Pfam" id="PF16916">
    <property type="entry name" value="ZT_dimer"/>
    <property type="match status" value="1"/>
</dbReference>
<dbReference type="SUPFAM" id="SSF160240">
    <property type="entry name" value="Cation efflux protein cytoplasmic domain-like"/>
    <property type="match status" value="1"/>
</dbReference>
<dbReference type="SUPFAM" id="SSF161111">
    <property type="entry name" value="Cation efflux protein transmembrane domain-like"/>
    <property type="match status" value="1"/>
</dbReference>